<evidence type="ECO:0000256" key="1">
    <source>
        <dbReference type="SAM" id="MobiDB-lite"/>
    </source>
</evidence>
<accession>P29124</accession>
<reference key="1">
    <citation type="journal article" date="1991" name="Virus Res.">
        <title>Equine herpesvirus 1 sequence near the left terminus codes for two open reading frames.</title>
        <authorList>
            <person name="Yalamanchili R.R."/>
            <person name="Raengsakulrach B."/>
            <person name="O'Callaghan D.J."/>
        </authorList>
    </citation>
    <scope>NUCLEOTIDE SEQUENCE [GENOMIC DNA]</scope>
</reference>
<reference key="2">
    <citation type="journal article" date="1992" name="Virus Res.">
        <title>Identification and expression of the UL1 gene product of equine herpesvirus 1.</title>
        <authorList>
            <person name="Harty R.N."/>
            <person name="O'Callaghan D.J."/>
        </authorList>
    </citation>
    <scope>IDENTIFICATION OF PROTEIN</scope>
</reference>
<organism>
    <name type="scientific">Equine herpesvirus 1 (strain Kentucky A)</name>
    <name type="common">EHV-1</name>
    <name type="synonym">Equine abortion virus</name>
    <dbReference type="NCBI Taxonomy" id="10329"/>
    <lineage>
        <taxon>Viruses</taxon>
        <taxon>Duplodnaviria</taxon>
        <taxon>Heunggongvirae</taxon>
        <taxon>Peploviricota</taxon>
        <taxon>Herviviricetes</taxon>
        <taxon>Herpesvirales</taxon>
        <taxon>Orthoherpesviridae</taxon>
        <taxon>Alphaherpesvirinae</taxon>
        <taxon>Varicellovirus</taxon>
        <taxon>Varicellovirus equidalpha1</taxon>
        <taxon>Equid alphaherpesvirus 1</taxon>
    </lineage>
</organism>
<protein>
    <recommendedName>
        <fullName>Gene 3 protein</fullName>
    </recommendedName>
    <alternativeName>
        <fullName>ORF L1</fullName>
    </alternativeName>
</protein>
<organismHost>
    <name type="scientific">Equus caballus</name>
    <name type="common">Horse</name>
    <dbReference type="NCBI Taxonomy" id="9796"/>
</organismHost>
<proteinExistence type="predicted"/>
<feature type="chain" id="PRO_0000116160" description="Gene 3 protein">
    <location>
        <begin position="1"/>
        <end position="258"/>
    </location>
</feature>
<feature type="region of interest" description="Disordered" evidence="1">
    <location>
        <begin position="163"/>
        <end position="258"/>
    </location>
</feature>
<feature type="compositionally biased region" description="Polar residues" evidence="1">
    <location>
        <begin position="163"/>
        <end position="176"/>
    </location>
</feature>
<feature type="compositionally biased region" description="Basic and acidic residues" evidence="1">
    <location>
        <begin position="214"/>
        <end position="240"/>
    </location>
</feature>
<dbReference type="EMBL" id="X59003">
    <property type="protein sequence ID" value="CAA41749.1"/>
    <property type="molecule type" value="Genomic_DNA"/>
</dbReference>
<dbReference type="PIR" id="A43490">
    <property type="entry name" value="WZBEKA"/>
</dbReference>
<dbReference type="InterPro" id="IPR010741">
    <property type="entry name" value="DUF1314"/>
</dbReference>
<dbReference type="Pfam" id="PF07013">
    <property type="entry name" value="DUF1314"/>
    <property type="match status" value="1"/>
</dbReference>
<name>VG03_EHV1K</name>
<sequence length="258" mass="28361">MGACCSSRRNRSPSLAALAEETEVVLRCLAGRVVDLPGGDEVRIAPDVGRPGQNFGYFKFPGPSRFAYVKFIGRAYALGSGRKFLLYLSRNFQVFGYEDGTGLHMLAKSLHDFLKFKGLSDRDLVVVDSVALTSQLRPLTLPIRSTSDVETLVAEEATTNYTSTENLLGQTQSSTHRPLGVPLSNVKTMGVPPTKPSSQRPRGKGGRPPARLKSIREETVSGMARAREECNSPSEHDRLTSEMTDCDTTRRYPPSFFK</sequence>